<protein>
    <recommendedName>
        <fullName evidence="7">Ubiquitin conjugation factor E4 A</fullName>
        <ecNumber evidence="6">2.3.2.27</ecNumber>
    </recommendedName>
</protein>
<reference key="1">
    <citation type="journal article" date="2009" name="PLoS Biol.">
        <title>Lineage-specific biology revealed by a finished genome assembly of the mouse.</title>
        <authorList>
            <person name="Church D.M."/>
            <person name="Goodstadt L."/>
            <person name="Hillier L.W."/>
            <person name="Zody M.C."/>
            <person name="Goldstein S."/>
            <person name="She X."/>
            <person name="Bult C.J."/>
            <person name="Agarwala R."/>
            <person name="Cherry J.L."/>
            <person name="DiCuccio M."/>
            <person name="Hlavina W."/>
            <person name="Kapustin Y."/>
            <person name="Meric P."/>
            <person name="Maglott D."/>
            <person name="Birtle Z."/>
            <person name="Marques A.C."/>
            <person name="Graves T."/>
            <person name="Zhou S."/>
            <person name="Teague B."/>
            <person name="Potamousis K."/>
            <person name="Churas C."/>
            <person name="Place M."/>
            <person name="Herschleb J."/>
            <person name="Runnheim R."/>
            <person name="Forrest D."/>
            <person name="Amos-Landgraf J."/>
            <person name="Schwartz D.C."/>
            <person name="Cheng Z."/>
            <person name="Lindblad-Toh K."/>
            <person name="Eichler E.E."/>
            <person name="Ponting C.P."/>
        </authorList>
    </citation>
    <scope>NUCLEOTIDE SEQUENCE [LARGE SCALE GENOMIC DNA]</scope>
    <source>
        <strain>C57BL/6J</strain>
    </source>
</reference>
<reference key="2">
    <citation type="journal article" date="2001" name="J. Biol. Chem.">
        <title>U box proteins as a new family of ubiquitin-protein ligases.</title>
        <authorList>
            <person name="Hatakeyama S."/>
            <person name="Yada M."/>
            <person name="Matsumoto M."/>
            <person name="Ishida N."/>
            <person name="Nakayama K.I."/>
        </authorList>
    </citation>
    <scope>FUNCTION</scope>
    <scope>CATALYTIC ACTIVITY</scope>
    <scope>PATHWAY</scope>
    <scope>SUBCELLULAR LOCATION</scope>
    <scope>TISSUE SPECIFICITY</scope>
</reference>
<reference key="3">
    <citation type="journal article" date="2010" name="Cell">
        <title>A tissue-specific atlas of mouse protein phosphorylation and expression.</title>
        <authorList>
            <person name="Huttlin E.L."/>
            <person name="Jedrychowski M.P."/>
            <person name="Elias J.E."/>
            <person name="Goswami T."/>
            <person name="Rad R."/>
            <person name="Beausoleil S.A."/>
            <person name="Villen J."/>
            <person name="Haas W."/>
            <person name="Sowa M.E."/>
            <person name="Gygi S.P."/>
        </authorList>
    </citation>
    <scope>IDENTIFICATION BY MASS SPECTROMETRY [LARGE SCALE ANALYSIS]</scope>
    <source>
        <tissue>Brain</tissue>
        <tissue>Brown adipose tissue</tissue>
        <tissue>Heart</tissue>
        <tissue>Kidney</tissue>
        <tissue>Liver</tissue>
        <tissue>Lung</tissue>
        <tissue>Pancreas</tissue>
        <tissue>Spleen</tissue>
        <tissue>Testis</tissue>
    </source>
</reference>
<accession>E9Q735</accession>
<feature type="chain" id="PRO_0000430791" description="Ubiquitin conjugation factor E4 A">
    <location>
        <begin position="1"/>
        <end position="1028"/>
    </location>
</feature>
<feature type="domain" description="U-box" evidence="4">
    <location>
        <begin position="949"/>
        <end position="1023"/>
    </location>
</feature>
<feature type="region of interest" description="Disordered" evidence="5">
    <location>
        <begin position="33"/>
        <end position="57"/>
    </location>
</feature>
<feature type="modified residue" description="N6-acetyllysine" evidence="2">
    <location>
        <position position="386"/>
    </location>
</feature>
<organism>
    <name type="scientific">Mus musculus</name>
    <name type="common">Mouse</name>
    <dbReference type="NCBI Taxonomy" id="10090"/>
    <lineage>
        <taxon>Eukaryota</taxon>
        <taxon>Metazoa</taxon>
        <taxon>Chordata</taxon>
        <taxon>Craniata</taxon>
        <taxon>Vertebrata</taxon>
        <taxon>Euteleostomi</taxon>
        <taxon>Mammalia</taxon>
        <taxon>Eutheria</taxon>
        <taxon>Euarchontoglires</taxon>
        <taxon>Glires</taxon>
        <taxon>Rodentia</taxon>
        <taxon>Myomorpha</taxon>
        <taxon>Muroidea</taxon>
        <taxon>Muridae</taxon>
        <taxon>Murinae</taxon>
        <taxon>Mus</taxon>
        <taxon>Mus</taxon>
    </lineage>
</organism>
<proteinExistence type="evidence at protein level"/>
<gene>
    <name evidence="8" type="primary">Ube4a</name>
    <name evidence="8" type="synonym">Ufd2b</name>
</gene>
<keyword id="KW-0007">Acetylation</keyword>
<keyword id="KW-0963">Cytoplasm</keyword>
<keyword id="KW-1185">Reference proteome</keyword>
<keyword id="KW-0808">Transferase</keyword>
<keyword id="KW-0833">Ubl conjugation pathway</keyword>
<comment type="function">
    <text evidence="1 6">Ubiquitin-protein ligase that probably functions as an E3 ligase in conjunction with specific E1 and E2 ligases. May also function as an E4 ligase mediating the assembly of polyubiquitin chains on substrates ubiquitinated by another E3 ubiquitin ligase. Mediates 'Lys-48'-linked polyubiquitination of substrates.</text>
</comment>
<comment type="catalytic activity">
    <reaction evidence="6">
        <text>S-ubiquitinyl-[E2 ubiquitin-conjugating enzyme]-L-cysteine + [acceptor protein]-L-lysine = [E2 ubiquitin-conjugating enzyme]-L-cysteine + N(6)-ubiquitinyl-[acceptor protein]-L-lysine.</text>
        <dbReference type="EC" id="2.3.2.27"/>
    </reaction>
</comment>
<comment type="pathway">
    <text evidence="6">Protein modification; protein ubiquitination.</text>
</comment>
<comment type="subcellular location">
    <subcellularLocation>
        <location evidence="6">Cytoplasm</location>
    </subcellularLocation>
</comment>
<comment type="tissue specificity">
    <text evidence="6">Expressed in liver, heart, brain, kidney and testis.</text>
</comment>
<comment type="domain">
    <text evidence="1 3">The U-box domain is required for the ubiquitin protein ligase activity.</text>
</comment>
<comment type="similarity">
    <text evidence="7">Belongs to the ubiquitin conjugation factor E4 family.</text>
</comment>
<evidence type="ECO:0000250" key="1">
    <source>
        <dbReference type="UniProtKB" id="P54860"/>
    </source>
</evidence>
<evidence type="ECO:0000250" key="2">
    <source>
        <dbReference type="UniProtKB" id="Q14139"/>
    </source>
</evidence>
<evidence type="ECO:0000250" key="3">
    <source>
        <dbReference type="UniProtKB" id="Q9ES00"/>
    </source>
</evidence>
<evidence type="ECO:0000255" key="4">
    <source>
        <dbReference type="PROSITE-ProRule" id="PRU01034"/>
    </source>
</evidence>
<evidence type="ECO:0000256" key="5">
    <source>
        <dbReference type="SAM" id="MobiDB-lite"/>
    </source>
</evidence>
<evidence type="ECO:0000269" key="6">
    <source>
    </source>
</evidence>
<evidence type="ECO:0000305" key="7"/>
<evidence type="ECO:0000312" key="8">
    <source>
        <dbReference type="MGI" id="MGI:2154580"/>
    </source>
</evidence>
<name>UBE4A_MOUSE</name>
<dbReference type="EC" id="2.3.2.27" evidence="6"/>
<dbReference type="EMBL" id="AC061963">
    <property type="status" value="NOT_ANNOTATED_CDS"/>
    <property type="molecule type" value="Genomic_DNA"/>
</dbReference>
<dbReference type="CCDS" id="CCDS23122.2"/>
<dbReference type="RefSeq" id="NP_663375.3">
    <property type="nucleotide sequence ID" value="NM_145400.3"/>
</dbReference>
<dbReference type="SMR" id="E9Q735"/>
<dbReference type="BioGRID" id="228292">
    <property type="interactions" value="10"/>
</dbReference>
<dbReference type="FunCoup" id="E9Q735">
    <property type="interactions" value="5519"/>
</dbReference>
<dbReference type="STRING" id="10090.ENSMUSP00000112632"/>
<dbReference type="GlyGen" id="E9Q735">
    <property type="glycosylation" value="2 sites, 1 N-linked glycan (1 site), 1 O-linked glycan (1 site)"/>
</dbReference>
<dbReference type="PhosphoSitePlus" id="E9Q735"/>
<dbReference type="jPOST" id="E9Q735"/>
<dbReference type="PaxDb" id="10090-ENSMUSP00000113346"/>
<dbReference type="PeptideAtlas" id="E9Q735"/>
<dbReference type="ProteomicsDB" id="298086"/>
<dbReference type="Pumba" id="E9Q735"/>
<dbReference type="Antibodypedia" id="32453">
    <property type="antibodies" value="253 antibodies from 32 providers"/>
</dbReference>
<dbReference type="DNASU" id="140630"/>
<dbReference type="Ensembl" id="ENSMUST00000117506.9">
    <property type="protein sequence ID" value="ENSMUSP00000113346.2"/>
    <property type="gene ID" value="ENSMUSG00000059890.17"/>
</dbReference>
<dbReference type="GeneID" id="140630"/>
<dbReference type="KEGG" id="mmu:140630"/>
<dbReference type="UCSC" id="uc009peu.2">
    <property type="organism name" value="mouse"/>
</dbReference>
<dbReference type="AGR" id="MGI:2154580"/>
<dbReference type="CTD" id="9354"/>
<dbReference type="MGI" id="MGI:2154580">
    <property type="gene designation" value="Ube4a"/>
</dbReference>
<dbReference type="VEuPathDB" id="HostDB:ENSMUSG00000059890"/>
<dbReference type="eggNOG" id="KOG2042">
    <property type="taxonomic scope" value="Eukaryota"/>
</dbReference>
<dbReference type="GeneTree" id="ENSGT00390000009300"/>
<dbReference type="InParanoid" id="E9Q735"/>
<dbReference type="OrthoDB" id="20295at2759"/>
<dbReference type="TreeFam" id="TF300802"/>
<dbReference type="Reactome" id="R-MMU-983168">
    <property type="pathway name" value="Antigen processing: Ubiquitination &amp; Proteasome degradation"/>
</dbReference>
<dbReference type="UniPathway" id="UPA00143"/>
<dbReference type="BioGRID-ORCS" id="140630">
    <property type="hits" value="3 hits in 78 CRISPR screens"/>
</dbReference>
<dbReference type="ChiTaRS" id="Ube4a">
    <property type="organism name" value="mouse"/>
</dbReference>
<dbReference type="PRO" id="PR:E9Q735"/>
<dbReference type="Proteomes" id="UP000000589">
    <property type="component" value="Chromosome 9"/>
</dbReference>
<dbReference type="RNAct" id="E9Q735">
    <property type="molecule type" value="protein"/>
</dbReference>
<dbReference type="Bgee" id="ENSMUSG00000059890">
    <property type="expression patterns" value="Expressed in hindlimb stylopod muscle and 202 other cell types or tissues"/>
</dbReference>
<dbReference type="ExpressionAtlas" id="E9Q735">
    <property type="expression patterns" value="baseline and differential"/>
</dbReference>
<dbReference type="GO" id="GO:0005737">
    <property type="term" value="C:cytoplasm"/>
    <property type="evidence" value="ECO:0000314"/>
    <property type="project" value="MGI"/>
</dbReference>
<dbReference type="GO" id="GO:0000151">
    <property type="term" value="C:ubiquitin ligase complex"/>
    <property type="evidence" value="ECO:0007669"/>
    <property type="project" value="InterPro"/>
</dbReference>
<dbReference type="GO" id="GO:0061630">
    <property type="term" value="F:ubiquitin protein ligase activity"/>
    <property type="evidence" value="ECO:0000314"/>
    <property type="project" value="MGI"/>
</dbReference>
<dbReference type="GO" id="GO:0034450">
    <property type="term" value="F:ubiquitin-ubiquitin ligase activity"/>
    <property type="evidence" value="ECO:0000314"/>
    <property type="project" value="MGI"/>
</dbReference>
<dbReference type="GO" id="GO:0036503">
    <property type="term" value="P:ERAD pathway"/>
    <property type="evidence" value="ECO:0007669"/>
    <property type="project" value="InterPro"/>
</dbReference>
<dbReference type="GO" id="GO:0000209">
    <property type="term" value="P:protein polyubiquitination"/>
    <property type="evidence" value="ECO:0000314"/>
    <property type="project" value="MGI"/>
</dbReference>
<dbReference type="GO" id="GO:0006511">
    <property type="term" value="P:ubiquitin-dependent protein catabolic process"/>
    <property type="evidence" value="ECO:0007669"/>
    <property type="project" value="InterPro"/>
</dbReference>
<dbReference type="CDD" id="cd16657">
    <property type="entry name" value="RING-Ubox_UBE4A"/>
    <property type="match status" value="1"/>
</dbReference>
<dbReference type="FunFam" id="3.30.40.10:FF:000055">
    <property type="entry name" value="Ubiquitin conjugation factor e4 a"/>
    <property type="match status" value="1"/>
</dbReference>
<dbReference type="Gene3D" id="3.30.40.10">
    <property type="entry name" value="Zinc/RING finger domain, C3HC4 (zinc finger)"/>
    <property type="match status" value="1"/>
</dbReference>
<dbReference type="InterPro" id="IPR019474">
    <property type="entry name" value="Ub_conjug_fac_E4_core"/>
</dbReference>
<dbReference type="InterPro" id="IPR045132">
    <property type="entry name" value="UBE4"/>
</dbReference>
<dbReference type="InterPro" id="IPR003613">
    <property type="entry name" value="Ubox_domain"/>
</dbReference>
<dbReference type="InterPro" id="IPR013083">
    <property type="entry name" value="Znf_RING/FYVE/PHD"/>
</dbReference>
<dbReference type="PANTHER" id="PTHR13931:SF16">
    <property type="entry name" value="UBIQUITIN CONJUGATION FACTOR E4 A"/>
    <property type="match status" value="1"/>
</dbReference>
<dbReference type="PANTHER" id="PTHR13931">
    <property type="entry name" value="UBIQUITINATION FACTOR E4"/>
    <property type="match status" value="1"/>
</dbReference>
<dbReference type="Pfam" id="PF04564">
    <property type="entry name" value="U-box"/>
    <property type="match status" value="1"/>
</dbReference>
<dbReference type="Pfam" id="PF10408">
    <property type="entry name" value="Ufd2P_core"/>
    <property type="match status" value="2"/>
</dbReference>
<dbReference type="SMART" id="SM00504">
    <property type="entry name" value="Ubox"/>
    <property type="match status" value="1"/>
</dbReference>
<dbReference type="SUPFAM" id="SSF57850">
    <property type="entry name" value="RING/U-box"/>
    <property type="match status" value="1"/>
</dbReference>
<dbReference type="PROSITE" id="PS51698">
    <property type="entry name" value="U_BOX"/>
    <property type="match status" value="1"/>
</dbReference>
<sequence length="1028" mass="118198">MTDQENNNNISSNPFAALFGSLADAKQFAAIQKEQLKQQSDELPASPDDSDNSVSESLDEFDYSVSEISRSFRTHQEMCEQLNINHMIQRIFLITLDNSDPSLKSGNGIPSRCVYLEEMAVELEDQDWLDMSNVEQAIFARLLLQDPGNHLISMTSSTTLNLSADRDAGERHIFCYLYSCFQRAKEEITKVPENLLPFAVQCRNLTVSNTRTVLLTPEIYVDQNIHEQLVDLMLEAIQGAHFEDVTEFLEEVIEALLLDEEVRTFPEVMIPVFDILLSRIKDLELCQILLYAYLDILLYFTRQKDMAKVFLEYIQPKDPSNGQMYQKTLLGVILNISCLLKTPGVVENHGFFLNPSRSSPQEIKVQEANIHQFMAQFHEKIYQMLKNLLQLSPETKHCILFWLGNCLHANAGRTKIWANQMPEIFFQMYASDAFFLNLGAALLKLCQPFCKPRSSRLLTFNPTYCVLKDLNDEERKIKSVHMRGLDKETCLIPAVQEPTFPQSYNLVTENLALTEYTLYLGFHRLHDQMVKINQNLHRLQVAWRDAQQSSSPAADNLREQFERLMTIYLSTKTAMTEPQMLQNCLNLQVSMAVLLVQLAIGNEGSQPIELSFPLPDGYSSLAYVPEFFADNLGDFLIFLRRFAEDILETSADSLEHVLHFITIFTGSIERMKNPHLRAKLAEVLEAVMPHLDQTPSPLVSSVFHRKRVFCNFPYAPQLAEALIKVFVDIEFTGDPHQFEQKFNYRRPMYPILRYMWGTDCYRESIKYLSKIKIQQIEKDRGEWESLTPEARREKEAGLQMFGQLARFHNIMSNETIGTLSFLTSEIKSLFVHPFLAERIISMLNYFLQHLVGPKMGALKVKDFSEFDFKPQQLVSDICTIYLNLGDEENFCATVPKDGRSYSPTLFAQTVRVLKKINKPGNMIVAFSNLAERIKSLADLQQQEEETYADACDEFLDPIMSTLMSDPVVLPSSRVTVDRSTIARHLLSDQTDPFNRSPLTMDQIRPNTELKEKIQRWLAERKQQKEQPE</sequence>